<proteinExistence type="inferred from homology"/>
<comment type="function">
    <text evidence="1">Tetrapolymerization of the monopyrrole PBG into the hydroxymethylbilane pre-uroporphyrinogen in several discrete steps.</text>
</comment>
<comment type="catalytic activity">
    <reaction evidence="1">
        <text>4 porphobilinogen + H2O = hydroxymethylbilane + 4 NH4(+)</text>
        <dbReference type="Rhea" id="RHEA:13185"/>
        <dbReference type="ChEBI" id="CHEBI:15377"/>
        <dbReference type="ChEBI" id="CHEBI:28938"/>
        <dbReference type="ChEBI" id="CHEBI:57845"/>
        <dbReference type="ChEBI" id="CHEBI:58126"/>
        <dbReference type="EC" id="2.5.1.61"/>
    </reaction>
</comment>
<comment type="cofactor">
    <cofactor evidence="1">
        <name>dipyrromethane</name>
        <dbReference type="ChEBI" id="CHEBI:60342"/>
    </cofactor>
    <text evidence="1">Binds 1 dipyrromethane group covalently.</text>
</comment>
<comment type="pathway">
    <text evidence="1">Porphyrin-containing compound metabolism; protoporphyrin-IX biosynthesis; coproporphyrinogen-III from 5-aminolevulinate: step 2/4.</text>
</comment>
<comment type="subunit">
    <text evidence="1">Monomer.</text>
</comment>
<comment type="miscellaneous">
    <text evidence="1">The porphobilinogen subunits are added to the dipyrromethane group.</text>
</comment>
<comment type="similarity">
    <text evidence="1">Belongs to the HMBS family.</text>
</comment>
<gene>
    <name evidence="1" type="primary">hemC</name>
    <name type="ordered locus">FTF0259</name>
</gene>
<reference key="1">
    <citation type="journal article" date="2007" name="PLoS ONE">
        <title>Genome sequencing shows that European isolates of Francisella tularensis subspecies tularensis are almost identical to US laboratory strain Schu S4.</title>
        <authorList>
            <person name="Chaudhuri R.R."/>
            <person name="Ren C.-P."/>
            <person name="Desmond L."/>
            <person name="Vincent G.A."/>
            <person name="Silman N.J."/>
            <person name="Brehm J.K."/>
            <person name="Elmore M.J."/>
            <person name="Hudson M.J."/>
            <person name="Forsman M."/>
            <person name="Isherwood K.E."/>
            <person name="Gurycova D."/>
            <person name="Minton N.P."/>
            <person name="Titball R.W."/>
            <person name="Pallen M.J."/>
            <person name="Vipond R."/>
        </authorList>
    </citation>
    <scope>NUCLEOTIDE SEQUENCE [LARGE SCALE GENOMIC DNA]</scope>
    <source>
        <strain>FSC 198</strain>
    </source>
</reference>
<dbReference type="EC" id="2.5.1.61" evidence="1"/>
<dbReference type="EMBL" id="AM286280">
    <property type="protein sequence ID" value="CAL08275.1"/>
    <property type="molecule type" value="Genomic_DNA"/>
</dbReference>
<dbReference type="RefSeq" id="WP_003021732.1">
    <property type="nucleotide sequence ID" value="NC_008245.1"/>
</dbReference>
<dbReference type="SMR" id="Q14JI3"/>
<dbReference type="KEGG" id="ftf:FTF0259"/>
<dbReference type="HOGENOM" id="CLU_019704_0_2_6"/>
<dbReference type="UniPathway" id="UPA00251">
    <property type="reaction ID" value="UER00319"/>
</dbReference>
<dbReference type="GO" id="GO:0005737">
    <property type="term" value="C:cytoplasm"/>
    <property type="evidence" value="ECO:0007669"/>
    <property type="project" value="TreeGrafter"/>
</dbReference>
<dbReference type="GO" id="GO:0004418">
    <property type="term" value="F:hydroxymethylbilane synthase activity"/>
    <property type="evidence" value="ECO:0007669"/>
    <property type="project" value="UniProtKB-UniRule"/>
</dbReference>
<dbReference type="GO" id="GO:0006782">
    <property type="term" value="P:protoporphyrinogen IX biosynthetic process"/>
    <property type="evidence" value="ECO:0007669"/>
    <property type="project" value="UniProtKB-UniRule"/>
</dbReference>
<dbReference type="CDD" id="cd13646">
    <property type="entry name" value="PBP2_EcHMBS_like"/>
    <property type="match status" value="1"/>
</dbReference>
<dbReference type="FunFam" id="3.40.190.10:FF:000004">
    <property type="entry name" value="Porphobilinogen deaminase"/>
    <property type="match status" value="1"/>
</dbReference>
<dbReference type="FunFam" id="3.40.190.10:FF:000005">
    <property type="entry name" value="Porphobilinogen deaminase"/>
    <property type="match status" value="1"/>
</dbReference>
<dbReference type="Gene3D" id="3.40.190.10">
    <property type="entry name" value="Periplasmic binding protein-like II"/>
    <property type="match status" value="2"/>
</dbReference>
<dbReference type="Gene3D" id="3.30.160.40">
    <property type="entry name" value="Porphobilinogen deaminase, C-terminal domain"/>
    <property type="match status" value="1"/>
</dbReference>
<dbReference type="HAMAP" id="MF_00260">
    <property type="entry name" value="Porphobil_deam"/>
    <property type="match status" value="1"/>
</dbReference>
<dbReference type="InterPro" id="IPR000860">
    <property type="entry name" value="HemC"/>
</dbReference>
<dbReference type="InterPro" id="IPR022419">
    <property type="entry name" value="Porphobilin_deaminase_cofac_BS"/>
</dbReference>
<dbReference type="InterPro" id="IPR022417">
    <property type="entry name" value="Porphobilin_deaminase_N"/>
</dbReference>
<dbReference type="InterPro" id="IPR022418">
    <property type="entry name" value="Porphobilinogen_deaminase_C"/>
</dbReference>
<dbReference type="InterPro" id="IPR036803">
    <property type="entry name" value="Porphobilinogen_deaminase_C_sf"/>
</dbReference>
<dbReference type="NCBIfam" id="TIGR00212">
    <property type="entry name" value="hemC"/>
    <property type="match status" value="1"/>
</dbReference>
<dbReference type="PANTHER" id="PTHR11557">
    <property type="entry name" value="PORPHOBILINOGEN DEAMINASE"/>
    <property type="match status" value="1"/>
</dbReference>
<dbReference type="PANTHER" id="PTHR11557:SF0">
    <property type="entry name" value="PORPHOBILINOGEN DEAMINASE"/>
    <property type="match status" value="1"/>
</dbReference>
<dbReference type="Pfam" id="PF01379">
    <property type="entry name" value="Porphobil_deam"/>
    <property type="match status" value="1"/>
</dbReference>
<dbReference type="Pfam" id="PF03900">
    <property type="entry name" value="Porphobil_deamC"/>
    <property type="match status" value="1"/>
</dbReference>
<dbReference type="PIRSF" id="PIRSF001438">
    <property type="entry name" value="4pyrrol_synth_OHMeBilane_synth"/>
    <property type="match status" value="1"/>
</dbReference>
<dbReference type="PRINTS" id="PR00151">
    <property type="entry name" value="PORPHBDMNASE"/>
</dbReference>
<dbReference type="SUPFAM" id="SSF53850">
    <property type="entry name" value="Periplasmic binding protein-like II"/>
    <property type="match status" value="1"/>
</dbReference>
<dbReference type="SUPFAM" id="SSF54782">
    <property type="entry name" value="Porphobilinogen deaminase (hydroxymethylbilane synthase), C-terminal domain"/>
    <property type="match status" value="1"/>
</dbReference>
<dbReference type="PROSITE" id="PS00533">
    <property type="entry name" value="PORPHOBILINOGEN_DEAM"/>
    <property type="match status" value="1"/>
</dbReference>
<keyword id="KW-0627">Porphyrin biosynthesis</keyword>
<keyword id="KW-0808">Transferase</keyword>
<sequence>MKQITIASRESKLALWQTNFVKNRIQLELNIPCEISTMKTQGDIILDQPLNKIGGKALFMKELEVAMLSNKADIAVHSLKDVPYQLPQGFCLAGFMPREDPRDAFVSNKYNSIDDLPKGAVVGTSSLRRKAQLLHYRDDLEIRDLRGNIQTRLSKLDNGDYDAIILASAGLIRLELVERITQFIPVEISLPAVGQGIVVIEALERDNDLLEKIQKLNCRESSRVATAERAFNQELKGGCHVAIGAYAELDNNQITLMAMVASSDGKKILKRKMIGDDPTKLGKLLAQEMIALGAYKILES</sequence>
<name>HEM3_FRAT1</name>
<protein>
    <recommendedName>
        <fullName evidence="1">Porphobilinogen deaminase</fullName>
        <shortName evidence="1">PBG</shortName>
        <ecNumber evidence="1">2.5.1.61</ecNumber>
    </recommendedName>
    <alternativeName>
        <fullName evidence="1">Hydroxymethylbilane synthase</fullName>
        <shortName evidence="1">HMBS</shortName>
    </alternativeName>
    <alternativeName>
        <fullName evidence="1">Pre-uroporphyrinogen synthase</fullName>
    </alternativeName>
</protein>
<accession>Q14JI3</accession>
<evidence type="ECO:0000255" key="1">
    <source>
        <dbReference type="HAMAP-Rule" id="MF_00260"/>
    </source>
</evidence>
<feature type="chain" id="PRO_0000304240" description="Porphobilinogen deaminase">
    <location>
        <begin position="1"/>
        <end position="300"/>
    </location>
</feature>
<feature type="modified residue" description="S-(dipyrrolylmethanemethyl)cysteine" evidence="1">
    <location>
        <position position="239"/>
    </location>
</feature>
<organism>
    <name type="scientific">Francisella tularensis subsp. tularensis (strain FSC 198)</name>
    <dbReference type="NCBI Taxonomy" id="393115"/>
    <lineage>
        <taxon>Bacteria</taxon>
        <taxon>Pseudomonadati</taxon>
        <taxon>Pseudomonadota</taxon>
        <taxon>Gammaproteobacteria</taxon>
        <taxon>Thiotrichales</taxon>
        <taxon>Francisellaceae</taxon>
        <taxon>Francisella</taxon>
    </lineage>
</organism>